<evidence type="ECO:0000250" key="1"/>
<evidence type="ECO:0000255" key="2">
    <source>
        <dbReference type="HAMAP-Rule" id="MF_00103"/>
    </source>
</evidence>
<comment type="function">
    <text evidence="2">Involved in base excision repair of DNA damaged by oxidation or by mutagenic agents. Acts as a DNA glycosylase that recognizes and removes damaged bases. Has a preference for oxidized purines, such as 7,8-dihydro-8-oxoguanine (8-oxoG). Has AP (apurinic/apyrimidinic) lyase activity and introduces nicks in the DNA strand. Cleaves the DNA backbone by beta-delta elimination to generate a single-strand break at the site of the removed base with both 3'- and 5'-phosphates.</text>
</comment>
<comment type="catalytic activity">
    <reaction evidence="2">
        <text>Hydrolysis of DNA containing ring-opened 7-methylguanine residues, releasing 2,6-diamino-4-hydroxy-5-(N-methyl)formamidopyrimidine.</text>
        <dbReference type="EC" id="3.2.2.23"/>
    </reaction>
</comment>
<comment type="catalytic activity">
    <reaction evidence="2">
        <text>2'-deoxyribonucleotide-(2'-deoxyribose 5'-phosphate)-2'-deoxyribonucleotide-DNA = a 3'-end 2'-deoxyribonucleotide-(2,3-dehydro-2,3-deoxyribose 5'-phosphate)-DNA + a 5'-end 5'-phospho-2'-deoxyribonucleoside-DNA + H(+)</text>
        <dbReference type="Rhea" id="RHEA:66592"/>
        <dbReference type="Rhea" id="RHEA-COMP:13180"/>
        <dbReference type="Rhea" id="RHEA-COMP:16897"/>
        <dbReference type="Rhea" id="RHEA-COMP:17067"/>
        <dbReference type="ChEBI" id="CHEBI:15378"/>
        <dbReference type="ChEBI" id="CHEBI:136412"/>
        <dbReference type="ChEBI" id="CHEBI:157695"/>
        <dbReference type="ChEBI" id="CHEBI:167181"/>
        <dbReference type="EC" id="4.2.99.18"/>
    </reaction>
</comment>
<comment type="cofactor">
    <cofactor evidence="2">
        <name>Zn(2+)</name>
        <dbReference type="ChEBI" id="CHEBI:29105"/>
    </cofactor>
    <text evidence="2">Binds 1 zinc ion per subunit.</text>
</comment>
<comment type="subunit">
    <text evidence="2">Monomer.</text>
</comment>
<comment type="similarity">
    <text evidence="2">Belongs to the FPG family.</text>
</comment>
<accession>Q6G4T2</accession>
<keyword id="KW-0227">DNA damage</keyword>
<keyword id="KW-0234">DNA repair</keyword>
<keyword id="KW-0238">DNA-binding</keyword>
<keyword id="KW-0326">Glycosidase</keyword>
<keyword id="KW-0378">Hydrolase</keyword>
<keyword id="KW-0456">Lyase</keyword>
<keyword id="KW-0479">Metal-binding</keyword>
<keyword id="KW-0511">Multifunctional enzyme</keyword>
<keyword id="KW-0862">Zinc</keyword>
<keyword id="KW-0863">Zinc-finger</keyword>
<sequence>MPELPEVETVRRGLEPVITGAKIVSVTLNRRDLRFPFPEAFSERLIGRTIMGLGRRAKYLLFHLSQNETILSHLGMSGSWRIEDDFLRERSSTVSKFVKHDHVVMDIQAKDGKVYHLTYNDVRRFGFMLLVDTRSLYEHPLLKKLGLEPMSNAFSGSYLQEVFVNKKISLKGVLLDQSIVAGLGNIYVCEALWRSRLSPQRGAFTLALKTECARELAASLAQNIRNVITEAISSGGSTLRDYIRTDGSLGYFQHSFSVYGREGKECLHCGIPIVRILQSGRSSFYCSQCQK</sequence>
<reference key="1">
    <citation type="journal article" date="2004" name="Proc. Natl. Acad. Sci. U.S.A.">
        <title>The louse-borne human pathogen Bartonella quintana is a genomic derivative of the zoonotic agent Bartonella henselae.</title>
        <authorList>
            <person name="Alsmark U.C.M."/>
            <person name="Frank A.C."/>
            <person name="Karlberg E.O."/>
            <person name="Legault B.-A."/>
            <person name="Ardell D.H."/>
            <person name="Canbaeck B."/>
            <person name="Eriksson A.-S."/>
            <person name="Naeslund A.K."/>
            <person name="Handley S.A."/>
            <person name="Huvet M."/>
            <person name="La Scola B."/>
            <person name="Holmberg M."/>
            <person name="Andersson S.G.E."/>
        </authorList>
    </citation>
    <scope>NUCLEOTIDE SEQUENCE [LARGE SCALE GENOMIC DNA]</scope>
    <source>
        <strain>ATCC 49882 / DSM 28221 / CCUG 30454 / Houston 1</strain>
    </source>
</reference>
<gene>
    <name evidence="2" type="primary">mutM</name>
    <name evidence="2" type="synonym">fpg</name>
    <name type="ordered locus">BH02510</name>
</gene>
<name>FPG_BARHE</name>
<dbReference type="EC" id="3.2.2.23" evidence="2"/>
<dbReference type="EC" id="4.2.99.18" evidence="2"/>
<dbReference type="EMBL" id="BX897699">
    <property type="protein sequence ID" value="CAF27063.1"/>
    <property type="molecule type" value="Genomic_DNA"/>
</dbReference>
<dbReference type="RefSeq" id="WP_011180201.1">
    <property type="nucleotide sequence ID" value="NZ_LRIJ02000001.1"/>
</dbReference>
<dbReference type="SMR" id="Q6G4T2"/>
<dbReference type="PaxDb" id="283166-BH02510"/>
<dbReference type="EnsemblBacteria" id="CAF27063">
    <property type="protein sequence ID" value="CAF27063"/>
    <property type="gene ID" value="BH02510"/>
</dbReference>
<dbReference type="GeneID" id="92984919"/>
<dbReference type="KEGG" id="bhe:BH02510"/>
<dbReference type="eggNOG" id="COG0266">
    <property type="taxonomic scope" value="Bacteria"/>
</dbReference>
<dbReference type="OrthoDB" id="9800855at2"/>
<dbReference type="Proteomes" id="UP000000421">
    <property type="component" value="Chromosome"/>
</dbReference>
<dbReference type="GO" id="GO:0034039">
    <property type="term" value="F:8-oxo-7,8-dihydroguanine DNA N-glycosylase activity"/>
    <property type="evidence" value="ECO:0007669"/>
    <property type="project" value="TreeGrafter"/>
</dbReference>
<dbReference type="GO" id="GO:0140078">
    <property type="term" value="F:class I DNA-(apurinic or apyrimidinic site) endonuclease activity"/>
    <property type="evidence" value="ECO:0007669"/>
    <property type="project" value="UniProtKB-EC"/>
</dbReference>
<dbReference type="GO" id="GO:0003684">
    <property type="term" value="F:damaged DNA binding"/>
    <property type="evidence" value="ECO:0007669"/>
    <property type="project" value="InterPro"/>
</dbReference>
<dbReference type="GO" id="GO:0008270">
    <property type="term" value="F:zinc ion binding"/>
    <property type="evidence" value="ECO:0007669"/>
    <property type="project" value="UniProtKB-UniRule"/>
</dbReference>
<dbReference type="GO" id="GO:0006284">
    <property type="term" value="P:base-excision repair"/>
    <property type="evidence" value="ECO:0007669"/>
    <property type="project" value="InterPro"/>
</dbReference>
<dbReference type="CDD" id="cd08966">
    <property type="entry name" value="EcFpg-like_N"/>
    <property type="match status" value="1"/>
</dbReference>
<dbReference type="FunFam" id="1.10.8.50:FF:000003">
    <property type="entry name" value="Formamidopyrimidine-DNA glycosylase"/>
    <property type="match status" value="1"/>
</dbReference>
<dbReference type="Gene3D" id="1.10.8.50">
    <property type="match status" value="1"/>
</dbReference>
<dbReference type="Gene3D" id="3.20.190.10">
    <property type="entry name" value="MutM-like, N-terminal"/>
    <property type="match status" value="1"/>
</dbReference>
<dbReference type="HAMAP" id="MF_00103">
    <property type="entry name" value="Fapy_DNA_glycosyl"/>
    <property type="match status" value="1"/>
</dbReference>
<dbReference type="InterPro" id="IPR015886">
    <property type="entry name" value="DNA_glyclase/AP_lyase_DNA-bd"/>
</dbReference>
<dbReference type="InterPro" id="IPR015887">
    <property type="entry name" value="DNA_glyclase_Znf_dom_DNA_BS"/>
</dbReference>
<dbReference type="InterPro" id="IPR020629">
    <property type="entry name" value="Formamido-pyr_DNA_Glyclase"/>
</dbReference>
<dbReference type="InterPro" id="IPR012319">
    <property type="entry name" value="FPG_cat"/>
</dbReference>
<dbReference type="InterPro" id="IPR035937">
    <property type="entry name" value="MutM-like_N-ter"/>
</dbReference>
<dbReference type="InterPro" id="IPR010979">
    <property type="entry name" value="Ribosomal_uS13-like_H2TH"/>
</dbReference>
<dbReference type="InterPro" id="IPR000214">
    <property type="entry name" value="Znf_DNA_glyclase/AP_lyase"/>
</dbReference>
<dbReference type="InterPro" id="IPR010663">
    <property type="entry name" value="Znf_FPG/IleRS"/>
</dbReference>
<dbReference type="NCBIfam" id="TIGR00577">
    <property type="entry name" value="fpg"/>
    <property type="match status" value="1"/>
</dbReference>
<dbReference type="NCBIfam" id="NF002211">
    <property type="entry name" value="PRK01103.1"/>
    <property type="match status" value="1"/>
</dbReference>
<dbReference type="PANTHER" id="PTHR22993">
    <property type="entry name" value="FORMAMIDOPYRIMIDINE-DNA GLYCOSYLASE"/>
    <property type="match status" value="1"/>
</dbReference>
<dbReference type="PANTHER" id="PTHR22993:SF9">
    <property type="entry name" value="FORMAMIDOPYRIMIDINE-DNA GLYCOSYLASE"/>
    <property type="match status" value="1"/>
</dbReference>
<dbReference type="Pfam" id="PF01149">
    <property type="entry name" value="Fapy_DNA_glyco"/>
    <property type="match status" value="1"/>
</dbReference>
<dbReference type="Pfam" id="PF06831">
    <property type="entry name" value="H2TH"/>
    <property type="match status" value="1"/>
</dbReference>
<dbReference type="Pfam" id="PF06827">
    <property type="entry name" value="zf-FPG_IleRS"/>
    <property type="match status" value="1"/>
</dbReference>
<dbReference type="SMART" id="SM00898">
    <property type="entry name" value="Fapy_DNA_glyco"/>
    <property type="match status" value="1"/>
</dbReference>
<dbReference type="SMART" id="SM01232">
    <property type="entry name" value="H2TH"/>
    <property type="match status" value="1"/>
</dbReference>
<dbReference type="SUPFAM" id="SSF57716">
    <property type="entry name" value="Glucocorticoid receptor-like (DNA-binding domain)"/>
    <property type="match status" value="1"/>
</dbReference>
<dbReference type="SUPFAM" id="SSF81624">
    <property type="entry name" value="N-terminal domain of MutM-like DNA repair proteins"/>
    <property type="match status" value="1"/>
</dbReference>
<dbReference type="SUPFAM" id="SSF46946">
    <property type="entry name" value="S13-like H2TH domain"/>
    <property type="match status" value="1"/>
</dbReference>
<dbReference type="PROSITE" id="PS51068">
    <property type="entry name" value="FPG_CAT"/>
    <property type="match status" value="1"/>
</dbReference>
<dbReference type="PROSITE" id="PS01242">
    <property type="entry name" value="ZF_FPG_1"/>
    <property type="match status" value="1"/>
</dbReference>
<dbReference type="PROSITE" id="PS51066">
    <property type="entry name" value="ZF_FPG_2"/>
    <property type="match status" value="1"/>
</dbReference>
<organism>
    <name type="scientific">Bartonella henselae (strain ATCC 49882 / DSM 28221 / CCUG 30454 / Houston 1)</name>
    <name type="common">Rochalimaea henselae</name>
    <dbReference type="NCBI Taxonomy" id="283166"/>
    <lineage>
        <taxon>Bacteria</taxon>
        <taxon>Pseudomonadati</taxon>
        <taxon>Pseudomonadota</taxon>
        <taxon>Alphaproteobacteria</taxon>
        <taxon>Hyphomicrobiales</taxon>
        <taxon>Bartonellaceae</taxon>
        <taxon>Bartonella</taxon>
    </lineage>
</organism>
<protein>
    <recommendedName>
        <fullName evidence="2">Formamidopyrimidine-DNA glycosylase</fullName>
        <shortName evidence="2">Fapy-DNA glycosylase</shortName>
        <ecNumber evidence="2">3.2.2.23</ecNumber>
    </recommendedName>
    <alternativeName>
        <fullName evidence="2">DNA-(apurinic or apyrimidinic site) lyase MutM</fullName>
        <shortName evidence="2">AP lyase MutM</shortName>
        <ecNumber evidence="2">4.2.99.18</ecNumber>
    </alternativeName>
</protein>
<feature type="initiator methionine" description="Removed" evidence="1">
    <location>
        <position position="1"/>
    </location>
</feature>
<feature type="chain" id="PRO_0000228416" description="Formamidopyrimidine-DNA glycosylase">
    <location>
        <begin position="2"/>
        <end position="291"/>
    </location>
</feature>
<feature type="zinc finger region" description="FPG-type" evidence="2">
    <location>
        <begin position="257"/>
        <end position="291"/>
    </location>
</feature>
<feature type="active site" description="Schiff-base intermediate with DNA" evidence="2">
    <location>
        <position position="2"/>
    </location>
</feature>
<feature type="active site" description="Proton donor" evidence="2">
    <location>
        <position position="3"/>
    </location>
</feature>
<feature type="active site" description="Proton donor; for beta-elimination activity" evidence="2">
    <location>
        <position position="58"/>
    </location>
</feature>
<feature type="active site" description="Proton donor; for delta-elimination activity" evidence="2">
    <location>
        <position position="281"/>
    </location>
</feature>
<feature type="binding site" evidence="2">
    <location>
        <position position="100"/>
    </location>
    <ligand>
        <name>DNA</name>
        <dbReference type="ChEBI" id="CHEBI:16991"/>
    </ligand>
</feature>
<feature type="binding site" evidence="2">
    <location>
        <position position="123"/>
    </location>
    <ligand>
        <name>DNA</name>
        <dbReference type="ChEBI" id="CHEBI:16991"/>
    </ligand>
</feature>
<feature type="binding site" evidence="2">
    <location>
        <position position="166"/>
    </location>
    <ligand>
        <name>DNA</name>
        <dbReference type="ChEBI" id="CHEBI:16991"/>
    </ligand>
</feature>
<proteinExistence type="inferred from homology"/>